<keyword id="KW-0067">ATP-binding</keyword>
<keyword id="KW-0143">Chaperone</keyword>
<keyword id="KW-0150">Chloroplast</keyword>
<keyword id="KW-0547">Nucleotide-binding</keyword>
<keyword id="KW-0934">Plastid</keyword>
<accession>P29215</accession>
<accession>O78509</accession>
<dbReference type="EMBL" id="AF041468">
    <property type="protein sequence ID" value="AAC35702.1"/>
    <property type="molecule type" value="Genomic_DNA"/>
</dbReference>
<dbReference type="PIR" id="A41609">
    <property type="entry name" value="A41609"/>
</dbReference>
<dbReference type="RefSeq" id="NP_050768.1">
    <property type="nucleotide sequence ID" value="NC_000926.1"/>
</dbReference>
<dbReference type="SMR" id="P29215"/>
<dbReference type="GeneID" id="857076"/>
<dbReference type="HOGENOM" id="CLU_005965_2_4_1"/>
<dbReference type="OMA" id="REPHKGI"/>
<dbReference type="GO" id="GO:0009507">
    <property type="term" value="C:chloroplast"/>
    <property type="evidence" value="ECO:0007669"/>
    <property type="project" value="UniProtKB-SubCell"/>
</dbReference>
<dbReference type="GO" id="GO:0005524">
    <property type="term" value="F:ATP binding"/>
    <property type="evidence" value="ECO:0007669"/>
    <property type="project" value="UniProtKB-UniRule"/>
</dbReference>
<dbReference type="GO" id="GO:0140662">
    <property type="term" value="F:ATP-dependent protein folding chaperone"/>
    <property type="evidence" value="ECO:0007669"/>
    <property type="project" value="InterPro"/>
</dbReference>
<dbReference type="GO" id="GO:0051082">
    <property type="term" value="F:unfolded protein binding"/>
    <property type="evidence" value="ECO:0007669"/>
    <property type="project" value="InterPro"/>
</dbReference>
<dbReference type="CDD" id="cd10234">
    <property type="entry name" value="ASKHA_NBD_HSP70_DnaK-like"/>
    <property type="match status" value="1"/>
</dbReference>
<dbReference type="FunFam" id="2.60.34.10:FF:000014">
    <property type="entry name" value="Chaperone protein DnaK HSP70"/>
    <property type="match status" value="1"/>
</dbReference>
<dbReference type="FunFam" id="1.20.1270.10:FF:000001">
    <property type="entry name" value="Molecular chaperone DnaK"/>
    <property type="match status" value="1"/>
</dbReference>
<dbReference type="FunFam" id="3.30.420.40:FF:000004">
    <property type="entry name" value="Molecular chaperone DnaK"/>
    <property type="match status" value="1"/>
</dbReference>
<dbReference type="FunFam" id="3.90.640.10:FF:000003">
    <property type="entry name" value="Molecular chaperone DnaK"/>
    <property type="match status" value="1"/>
</dbReference>
<dbReference type="Gene3D" id="1.20.1270.10">
    <property type="match status" value="1"/>
</dbReference>
<dbReference type="Gene3D" id="3.30.420.40">
    <property type="match status" value="2"/>
</dbReference>
<dbReference type="Gene3D" id="3.90.640.10">
    <property type="entry name" value="Actin, Chain A, domain 4"/>
    <property type="match status" value="1"/>
</dbReference>
<dbReference type="Gene3D" id="2.60.34.10">
    <property type="entry name" value="Substrate Binding Domain Of DNAk, Chain A, domain 1"/>
    <property type="match status" value="1"/>
</dbReference>
<dbReference type="HAMAP" id="MF_00332">
    <property type="entry name" value="DnaK"/>
    <property type="match status" value="1"/>
</dbReference>
<dbReference type="InterPro" id="IPR043129">
    <property type="entry name" value="ATPase_NBD"/>
</dbReference>
<dbReference type="InterPro" id="IPR012725">
    <property type="entry name" value="Chaperone_DnaK"/>
</dbReference>
<dbReference type="InterPro" id="IPR018181">
    <property type="entry name" value="Heat_shock_70_CS"/>
</dbReference>
<dbReference type="InterPro" id="IPR029048">
    <property type="entry name" value="HSP70_C_sf"/>
</dbReference>
<dbReference type="InterPro" id="IPR029047">
    <property type="entry name" value="HSP70_peptide-bd_sf"/>
</dbReference>
<dbReference type="InterPro" id="IPR013126">
    <property type="entry name" value="Hsp_70_fam"/>
</dbReference>
<dbReference type="NCBIfam" id="NF001413">
    <property type="entry name" value="PRK00290.1"/>
    <property type="match status" value="1"/>
</dbReference>
<dbReference type="NCBIfam" id="NF003520">
    <property type="entry name" value="PRK05183.1"/>
    <property type="match status" value="1"/>
</dbReference>
<dbReference type="NCBIfam" id="TIGR02350">
    <property type="entry name" value="prok_dnaK"/>
    <property type="match status" value="1"/>
</dbReference>
<dbReference type="PANTHER" id="PTHR19375">
    <property type="entry name" value="HEAT SHOCK PROTEIN 70KDA"/>
    <property type="match status" value="1"/>
</dbReference>
<dbReference type="Pfam" id="PF00012">
    <property type="entry name" value="HSP70"/>
    <property type="match status" value="1"/>
</dbReference>
<dbReference type="PRINTS" id="PR00301">
    <property type="entry name" value="HEATSHOCK70"/>
</dbReference>
<dbReference type="SUPFAM" id="SSF53067">
    <property type="entry name" value="Actin-like ATPase domain"/>
    <property type="match status" value="2"/>
</dbReference>
<dbReference type="SUPFAM" id="SSF100934">
    <property type="entry name" value="Heat shock protein 70kD (HSP70), C-terminal subdomain"/>
    <property type="match status" value="1"/>
</dbReference>
<dbReference type="SUPFAM" id="SSF100920">
    <property type="entry name" value="Heat shock protein 70kD (HSP70), peptide-binding domain"/>
    <property type="match status" value="1"/>
</dbReference>
<dbReference type="PROSITE" id="PS00297">
    <property type="entry name" value="HSP70_1"/>
    <property type="match status" value="1"/>
</dbReference>
<dbReference type="PROSITE" id="PS00329">
    <property type="entry name" value="HSP70_2"/>
    <property type="match status" value="1"/>
</dbReference>
<dbReference type="PROSITE" id="PS01036">
    <property type="entry name" value="HSP70_3"/>
    <property type="match status" value="1"/>
</dbReference>
<reference key="1">
    <citation type="journal article" date="1991" name="Proc. Natl. Acad. Sci. U.S.A.">
        <title>The plastid genome of Cryptomonas phi encodes an hsp70-like protein, a histone-like protein, and an acyl carrier protein.</title>
        <authorList>
            <person name="Wang S."/>
            <person name="Liu X.-Q."/>
        </authorList>
    </citation>
    <scope>NUCLEOTIDE SEQUENCE [LARGE SCALE GENOMIC DNA]</scope>
</reference>
<reference key="2">
    <citation type="journal article" date="1999" name="J. Mol. Evol.">
        <title>The plastid genome of the cryptophyte alga, Guillardia theta: complete sequence and conserved synteny groups confirm its common ancestry with red algae.</title>
        <authorList>
            <person name="Douglas S.E."/>
            <person name="Penny S.L."/>
        </authorList>
    </citation>
    <scope>NUCLEOTIDE SEQUENCE [LARGE SCALE GENOMIC DNA]</scope>
</reference>
<protein>
    <recommendedName>
        <fullName>Chaperone protein dnaK</fullName>
    </recommendedName>
    <alternativeName>
        <fullName>HSP70</fullName>
    </alternativeName>
    <alternativeName>
        <fullName>Heat shock 70 kDa protein</fullName>
    </alternativeName>
    <alternativeName>
        <fullName>Heat shock protein 70</fullName>
    </alternativeName>
</protein>
<proteinExistence type="inferred from homology"/>
<sequence>MGKVVGIDLGTTNSVVAVMEGGKPAVIQNAEGFRTTPSVVAYTKTGDRLVGQIAKRQAVINPDNTFYSVKRFIGRRSEEVSEELKQVSYIVKTDSNGNIKLDCPSLKKEFASEEISAEVLRKLVDDASKYLGESVKQAVITVPAYFNDSQRQATKDAGRIAGLEVLRIINEPTAASLAYGLDKKNNETILVFDLGGGTFDVSVLEVGDGVFEVLSTSGDTHLGGDDFDDKIVQWLLKEFETEHSINLKSDRQALQRLTEASEKAKIELSNLSQTEINLPFLTATETGPKHLERSITRAKFEELCSDLINRVKIPVENALKDAKLDSSKIDEVVLVGGSTRIPAIQELVKRILNKTPNQTVNPDEVVAIGAAVQAGVLAGEVKDILLLDVTPLSLGVETLGGVTTRIIPRNTTIPTKKSEVFSTAVDNQPNVEIHVLQGEREFAKDNKSLGTFRLDGILPAPRGVPQIEVTFDIDANGILSVTAKDKGTGKEQSITITGASTLPSDEVERMVNEAQNSAKEDKEKRDKIDLKNQSDSLCYQSEKQLKELEGKIDDTNKNKISSMISELRNAINNENYDEMRDLNSKLQTALMDLGKSVYEKTSKEQTSTSSPTNSNDSVIDADFSETK</sequence>
<evidence type="ECO:0000250" key="1"/>
<evidence type="ECO:0000256" key="2">
    <source>
        <dbReference type="SAM" id="MobiDB-lite"/>
    </source>
</evidence>
<evidence type="ECO:0000305" key="3"/>
<gene>
    <name type="primary">dnaK</name>
    <name type="synonym">ctp70</name>
</gene>
<organism>
    <name type="scientific">Guillardia theta</name>
    <name type="common">Cryptophyte</name>
    <name type="synonym">Cryptomonas phi</name>
    <dbReference type="NCBI Taxonomy" id="55529"/>
    <lineage>
        <taxon>Eukaryota</taxon>
        <taxon>Cryptophyceae</taxon>
        <taxon>Pyrenomonadales</taxon>
        <taxon>Geminigeraceae</taxon>
        <taxon>Guillardia</taxon>
    </lineage>
</organism>
<feature type="chain" id="PRO_0000078608" description="Chaperone protein dnaK">
    <location>
        <begin position="1"/>
        <end position="627"/>
    </location>
</feature>
<feature type="region of interest" description="Disordered" evidence="2">
    <location>
        <begin position="597"/>
        <end position="627"/>
    </location>
</feature>
<feature type="compositionally biased region" description="Low complexity" evidence="2">
    <location>
        <begin position="604"/>
        <end position="617"/>
    </location>
</feature>
<feature type="sequence conflict" description="In Ref. 1." evidence="3" ref="1">
    <original>K</original>
    <variation>L</variation>
    <location>
        <position position="551"/>
    </location>
</feature>
<feature type="sequence conflict" description="In Ref. 1." evidence="3" ref="1">
    <original>L</original>
    <variation>V</variation>
    <location>
        <position position="586"/>
    </location>
</feature>
<feature type="sequence conflict" description="In Ref. 1." evidence="3" ref="1">
    <original>E</original>
    <variation>Q</variation>
    <location>
        <position position="604"/>
    </location>
</feature>
<geneLocation type="chloroplast"/>
<comment type="function">
    <text evidence="1">Acts as a chaperone.</text>
</comment>
<comment type="subcellular location">
    <subcellularLocation>
        <location>Plastid</location>
        <location>Chloroplast</location>
    </subcellularLocation>
</comment>
<comment type="similarity">
    <text evidence="3">Belongs to the heat shock protein 70 family.</text>
</comment>
<name>DNAK_GUITH</name>